<gene>
    <name evidence="1" type="primary">dut</name>
    <name type="ordered locus">PG_0953</name>
</gene>
<accession>Q7MVT6</accession>
<reference key="1">
    <citation type="journal article" date="2003" name="J. Bacteriol.">
        <title>Complete genome sequence of the oral pathogenic bacterium Porphyromonas gingivalis strain W83.</title>
        <authorList>
            <person name="Nelson K.E."/>
            <person name="Fleischmann R.D."/>
            <person name="DeBoy R.T."/>
            <person name="Paulsen I.T."/>
            <person name="Fouts D.E."/>
            <person name="Eisen J.A."/>
            <person name="Daugherty S.C."/>
            <person name="Dodson R.J."/>
            <person name="Durkin A.S."/>
            <person name="Gwinn M.L."/>
            <person name="Haft D.H."/>
            <person name="Kolonay J.F."/>
            <person name="Nelson W.C."/>
            <person name="Mason T.M."/>
            <person name="Tallon L."/>
            <person name="Gray J."/>
            <person name="Granger D."/>
            <person name="Tettelin H."/>
            <person name="Dong H."/>
            <person name="Galvin J.L."/>
            <person name="Duncan M.J."/>
            <person name="Dewhirst F.E."/>
            <person name="Fraser C.M."/>
        </authorList>
    </citation>
    <scope>NUCLEOTIDE SEQUENCE [LARGE SCALE GENOMIC DNA]</scope>
    <source>
        <strain>ATCC BAA-308 / W83</strain>
    </source>
</reference>
<keyword id="KW-0378">Hydrolase</keyword>
<keyword id="KW-0460">Magnesium</keyword>
<keyword id="KW-0479">Metal-binding</keyword>
<keyword id="KW-0546">Nucleotide metabolism</keyword>
<keyword id="KW-1185">Reference proteome</keyword>
<organism>
    <name type="scientific">Porphyromonas gingivalis (strain ATCC BAA-308 / W83)</name>
    <dbReference type="NCBI Taxonomy" id="242619"/>
    <lineage>
        <taxon>Bacteria</taxon>
        <taxon>Pseudomonadati</taxon>
        <taxon>Bacteroidota</taxon>
        <taxon>Bacteroidia</taxon>
        <taxon>Bacteroidales</taxon>
        <taxon>Porphyromonadaceae</taxon>
        <taxon>Porphyromonas</taxon>
    </lineage>
</organism>
<comment type="function">
    <text evidence="1">This enzyme is involved in nucleotide metabolism: it produces dUMP, the immediate precursor of thymidine nucleotides and it decreases the intracellular concentration of dUTP so that uracil cannot be incorporated into DNA.</text>
</comment>
<comment type="catalytic activity">
    <reaction evidence="1">
        <text>dUTP + H2O = dUMP + diphosphate + H(+)</text>
        <dbReference type="Rhea" id="RHEA:10248"/>
        <dbReference type="ChEBI" id="CHEBI:15377"/>
        <dbReference type="ChEBI" id="CHEBI:15378"/>
        <dbReference type="ChEBI" id="CHEBI:33019"/>
        <dbReference type="ChEBI" id="CHEBI:61555"/>
        <dbReference type="ChEBI" id="CHEBI:246422"/>
        <dbReference type="EC" id="3.6.1.23"/>
    </reaction>
</comment>
<comment type="cofactor">
    <cofactor evidence="1">
        <name>Mg(2+)</name>
        <dbReference type="ChEBI" id="CHEBI:18420"/>
    </cofactor>
</comment>
<comment type="pathway">
    <text evidence="1">Pyrimidine metabolism; dUMP biosynthesis; dUMP from dCTP (dUTP route): step 2/2.</text>
</comment>
<comment type="similarity">
    <text evidence="1">Belongs to the dUTPase family.</text>
</comment>
<proteinExistence type="inferred from homology"/>
<feature type="chain" id="PRO_0000182892" description="Deoxyuridine 5'-triphosphate nucleotidohydrolase">
    <location>
        <begin position="1"/>
        <end position="144"/>
    </location>
</feature>
<feature type="binding site" evidence="1">
    <location>
        <begin position="63"/>
        <end position="65"/>
    </location>
    <ligand>
        <name>substrate</name>
    </ligand>
</feature>
<feature type="binding site" evidence="1">
    <location>
        <position position="76"/>
    </location>
    <ligand>
        <name>substrate</name>
    </ligand>
</feature>
<feature type="binding site" evidence="1">
    <location>
        <begin position="80"/>
        <end position="82"/>
    </location>
    <ligand>
        <name>substrate</name>
    </ligand>
</feature>
<sequence length="144" mass="15766">MKIKIINRSHHPLPTYATSASAGMDLRASIEEPITLLPLERRLIPTGLFIELPVGYEAQIRPRSGLALRHGITLVNSPGTIDADYRGEIGIIMINLSNTPFTIADGERICQLVIARHEQAEWVLTDELADTERGAGGFGHTGKE</sequence>
<dbReference type="EC" id="3.6.1.23" evidence="1"/>
<dbReference type="EMBL" id="AE015924">
    <property type="protein sequence ID" value="AAQ66083.1"/>
    <property type="molecule type" value="Genomic_DNA"/>
</dbReference>
<dbReference type="RefSeq" id="WP_010956168.1">
    <property type="nucleotide sequence ID" value="NC_002950.2"/>
</dbReference>
<dbReference type="SMR" id="Q7MVT6"/>
<dbReference type="STRING" id="242619.PG_0953"/>
<dbReference type="EnsemblBacteria" id="AAQ66083">
    <property type="protein sequence ID" value="AAQ66083"/>
    <property type="gene ID" value="PG_0953"/>
</dbReference>
<dbReference type="KEGG" id="pgi:PG_0953"/>
<dbReference type="eggNOG" id="COG0756">
    <property type="taxonomic scope" value="Bacteria"/>
</dbReference>
<dbReference type="HOGENOM" id="CLU_068508_1_2_10"/>
<dbReference type="UniPathway" id="UPA00610">
    <property type="reaction ID" value="UER00666"/>
</dbReference>
<dbReference type="Proteomes" id="UP000000588">
    <property type="component" value="Chromosome"/>
</dbReference>
<dbReference type="GO" id="GO:0004170">
    <property type="term" value="F:dUTP diphosphatase activity"/>
    <property type="evidence" value="ECO:0007669"/>
    <property type="project" value="UniProtKB-UniRule"/>
</dbReference>
<dbReference type="GO" id="GO:0000287">
    <property type="term" value="F:magnesium ion binding"/>
    <property type="evidence" value="ECO:0007669"/>
    <property type="project" value="UniProtKB-UniRule"/>
</dbReference>
<dbReference type="GO" id="GO:0006226">
    <property type="term" value="P:dUMP biosynthetic process"/>
    <property type="evidence" value="ECO:0007669"/>
    <property type="project" value="UniProtKB-UniRule"/>
</dbReference>
<dbReference type="GO" id="GO:0046081">
    <property type="term" value="P:dUTP catabolic process"/>
    <property type="evidence" value="ECO:0007669"/>
    <property type="project" value="InterPro"/>
</dbReference>
<dbReference type="CDD" id="cd07557">
    <property type="entry name" value="trimeric_dUTPase"/>
    <property type="match status" value="1"/>
</dbReference>
<dbReference type="FunFam" id="2.70.40.10:FF:000002">
    <property type="entry name" value="dUTP diphosphatase"/>
    <property type="match status" value="1"/>
</dbReference>
<dbReference type="Gene3D" id="2.70.40.10">
    <property type="match status" value="1"/>
</dbReference>
<dbReference type="HAMAP" id="MF_00116">
    <property type="entry name" value="dUTPase_bact"/>
    <property type="match status" value="1"/>
</dbReference>
<dbReference type="InterPro" id="IPR008181">
    <property type="entry name" value="dUTPase"/>
</dbReference>
<dbReference type="InterPro" id="IPR029054">
    <property type="entry name" value="dUTPase-like"/>
</dbReference>
<dbReference type="InterPro" id="IPR036157">
    <property type="entry name" value="dUTPase-like_sf"/>
</dbReference>
<dbReference type="InterPro" id="IPR033704">
    <property type="entry name" value="dUTPase_trimeric"/>
</dbReference>
<dbReference type="NCBIfam" id="TIGR00576">
    <property type="entry name" value="dut"/>
    <property type="match status" value="1"/>
</dbReference>
<dbReference type="NCBIfam" id="NF001862">
    <property type="entry name" value="PRK00601.1"/>
    <property type="match status" value="1"/>
</dbReference>
<dbReference type="PANTHER" id="PTHR11241">
    <property type="entry name" value="DEOXYURIDINE 5'-TRIPHOSPHATE NUCLEOTIDOHYDROLASE"/>
    <property type="match status" value="1"/>
</dbReference>
<dbReference type="PANTHER" id="PTHR11241:SF0">
    <property type="entry name" value="DEOXYURIDINE 5'-TRIPHOSPHATE NUCLEOTIDOHYDROLASE"/>
    <property type="match status" value="1"/>
</dbReference>
<dbReference type="Pfam" id="PF00692">
    <property type="entry name" value="dUTPase"/>
    <property type="match status" value="1"/>
</dbReference>
<dbReference type="SUPFAM" id="SSF51283">
    <property type="entry name" value="dUTPase-like"/>
    <property type="match status" value="1"/>
</dbReference>
<evidence type="ECO:0000255" key="1">
    <source>
        <dbReference type="HAMAP-Rule" id="MF_00116"/>
    </source>
</evidence>
<name>DUT_PORGI</name>
<protein>
    <recommendedName>
        <fullName evidence="1">Deoxyuridine 5'-triphosphate nucleotidohydrolase</fullName>
        <shortName evidence="1">dUTPase</shortName>
        <ecNumber evidence="1">3.6.1.23</ecNumber>
    </recommendedName>
    <alternativeName>
        <fullName evidence="1">dUTP pyrophosphatase</fullName>
    </alternativeName>
</protein>